<reference key="1">
    <citation type="journal article" date="2005" name="J. Bacteriol.">
        <title>Whole-genome sequence analysis of Pseudomonas syringae pv. phaseolicola 1448A reveals divergence among pathovars in genes involved in virulence and transposition.</title>
        <authorList>
            <person name="Joardar V."/>
            <person name="Lindeberg M."/>
            <person name="Jackson R.W."/>
            <person name="Selengut J."/>
            <person name="Dodson R."/>
            <person name="Brinkac L.M."/>
            <person name="Daugherty S.C."/>
            <person name="DeBoy R.T."/>
            <person name="Durkin A.S."/>
            <person name="Gwinn Giglio M."/>
            <person name="Madupu R."/>
            <person name="Nelson W.C."/>
            <person name="Rosovitz M.J."/>
            <person name="Sullivan S.A."/>
            <person name="Crabtree J."/>
            <person name="Creasy T."/>
            <person name="Davidsen T.M."/>
            <person name="Haft D.H."/>
            <person name="Zafar N."/>
            <person name="Zhou L."/>
            <person name="Halpin R."/>
            <person name="Holley T."/>
            <person name="Khouri H.M."/>
            <person name="Feldblyum T.V."/>
            <person name="White O."/>
            <person name="Fraser C.M."/>
            <person name="Chatterjee A.K."/>
            <person name="Cartinhour S."/>
            <person name="Schneider D."/>
            <person name="Mansfield J.W."/>
            <person name="Collmer A."/>
            <person name="Buell R."/>
        </authorList>
    </citation>
    <scope>NUCLEOTIDE SEQUENCE [LARGE SCALE GENOMIC DNA]</scope>
    <source>
        <strain>1448A / Race 6</strain>
    </source>
</reference>
<gene>
    <name evidence="1" type="primary">rlmG</name>
    <name type="ordered locus">PSPPH_4337</name>
</gene>
<organism>
    <name type="scientific">Pseudomonas savastanoi pv. phaseolicola (strain 1448A / Race 6)</name>
    <name type="common">Pseudomonas syringae pv. phaseolicola (strain 1448A / Race 6)</name>
    <dbReference type="NCBI Taxonomy" id="264730"/>
    <lineage>
        <taxon>Bacteria</taxon>
        <taxon>Pseudomonadati</taxon>
        <taxon>Pseudomonadota</taxon>
        <taxon>Gammaproteobacteria</taxon>
        <taxon>Pseudomonadales</taxon>
        <taxon>Pseudomonadaceae</taxon>
        <taxon>Pseudomonas</taxon>
    </lineage>
</organism>
<comment type="function">
    <text evidence="1">Specifically methylates the guanine in position 1835 (m2G1835) of 23S rRNA.</text>
</comment>
<comment type="catalytic activity">
    <reaction evidence="1">
        <text>guanosine(1835) in 23S rRNA + S-adenosyl-L-methionine = N(2)-methylguanosine(1835) in 23S rRNA + S-adenosyl-L-homocysteine + H(+)</text>
        <dbReference type="Rhea" id="RHEA:42744"/>
        <dbReference type="Rhea" id="RHEA-COMP:10217"/>
        <dbReference type="Rhea" id="RHEA-COMP:10218"/>
        <dbReference type="ChEBI" id="CHEBI:15378"/>
        <dbReference type="ChEBI" id="CHEBI:57856"/>
        <dbReference type="ChEBI" id="CHEBI:59789"/>
        <dbReference type="ChEBI" id="CHEBI:74269"/>
        <dbReference type="ChEBI" id="CHEBI:74481"/>
        <dbReference type="EC" id="2.1.1.174"/>
    </reaction>
</comment>
<comment type="subcellular location">
    <subcellularLocation>
        <location evidence="1">Cytoplasm</location>
    </subcellularLocation>
</comment>
<comment type="similarity">
    <text evidence="1">Belongs to the methyltransferase superfamily. RlmG family.</text>
</comment>
<comment type="sequence caution" evidence="2">
    <conflict type="erroneous initiation">
        <sequence resource="EMBL-CDS" id="AAZ36436"/>
    </conflict>
</comment>
<feature type="chain" id="PRO_0000366485" description="Ribosomal RNA large subunit methyltransferase G">
    <location>
        <begin position="1"/>
        <end position="374"/>
    </location>
</feature>
<proteinExistence type="inferred from homology"/>
<dbReference type="EC" id="2.1.1.174" evidence="1"/>
<dbReference type="EMBL" id="CP000058">
    <property type="protein sequence ID" value="AAZ36436.1"/>
    <property type="status" value="ALT_INIT"/>
    <property type="molecule type" value="Genomic_DNA"/>
</dbReference>
<dbReference type="RefSeq" id="WP_041924638.1">
    <property type="nucleotide sequence ID" value="NC_005773.3"/>
</dbReference>
<dbReference type="SMR" id="Q48DT7"/>
<dbReference type="KEGG" id="psp:PSPPH_4337"/>
<dbReference type="eggNOG" id="COG2813">
    <property type="taxonomic scope" value="Bacteria"/>
</dbReference>
<dbReference type="HOGENOM" id="CLU_040288_4_0_6"/>
<dbReference type="Proteomes" id="UP000000551">
    <property type="component" value="Chromosome"/>
</dbReference>
<dbReference type="GO" id="GO:0005737">
    <property type="term" value="C:cytoplasm"/>
    <property type="evidence" value="ECO:0007669"/>
    <property type="project" value="UniProtKB-SubCell"/>
</dbReference>
<dbReference type="GO" id="GO:0052916">
    <property type="term" value="F:23S rRNA (guanine(1835)-N(2))-methyltransferase activity"/>
    <property type="evidence" value="ECO:0007669"/>
    <property type="project" value="UniProtKB-EC"/>
</dbReference>
<dbReference type="GO" id="GO:0003676">
    <property type="term" value="F:nucleic acid binding"/>
    <property type="evidence" value="ECO:0007669"/>
    <property type="project" value="InterPro"/>
</dbReference>
<dbReference type="CDD" id="cd02440">
    <property type="entry name" value="AdoMet_MTases"/>
    <property type="match status" value="1"/>
</dbReference>
<dbReference type="Gene3D" id="3.40.50.150">
    <property type="entry name" value="Vaccinia Virus protein VP39"/>
    <property type="match status" value="2"/>
</dbReference>
<dbReference type="HAMAP" id="MF_01859">
    <property type="entry name" value="23SrRNA_methyltr_G"/>
    <property type="match status" value="1"/>
</dbReference>
<dbReference type="InterPro" id="IPR002052">
    <property type="entry name" value="DNA_methylase_N6_adenine_CS"/>
</dbReference>
<dbReference type="InterPro" id="IPR017237">
    <property type="entry name" value="rRNA_m2G-MeTrfase_RlmG"/>
</dbReference>
<dbReference type="InterPro" id="IPR046977">
    <property type="entry name" value="RsmC/RlmG"/>
</dbReference>
<dbReference type="InterPro" id="IPR029063">
    <property type="entry name" value="SAM-dependent_MTases_sf"/>
</dbReference>
<dbReference type="InterPro" id="IPR007848">
    <property type="entry name" value="Small_mtfrase_dom"/>
</dbReference>
<dbReference type="PANTHER" id="PTHR47816:SF5">
    <property type="entry name" value="RIBOSOMAL RNA LARGE SUBUNIT METHYLTRANSFERASE G"/>
    <property type="match status" value="1"/>
</dbReference>
<dbReference type="PANTHER" id="PTHR47816">
    <property type="entry name" value="RIBOSOMAL RNA SMALL SUBUNIT METHYLTRANSFERASE C"/>
    <property type="match status" value="1"/>
</dbReference>
<dbReference type="Pfam" id="PF05175">
    <property type="entry name" value="MTS"/>
    <property type="match status" value="1"/>
</dbReference>
<dbReference type="PIRSF" id="PIRSF037565">
    <property type="entry name" value="RRNA_m2G_Mtase_RsmD_prd"/>
    <property type="match status" value="1"/>
</dbReference>
<dbReference type="SUPFAM" id="SSF53335">
    <property type="entry name" value="S-adenosyl-L-methionine-dependent methyltransferases"/>
    <property type="match status" value="1"/>
</dbReference>
<sequence length="374" mass="40697">MPLLISPFAELDLIRQPEQQDEPLQAFDAADEYLLNHVAETGLSLQSRVLVLNDSFGALAASLASHATVVSSTDSFLAAQGLEKNLARNGMSYDAVPHIPASEPLSGPFDWVLIRVPKTLALLEEQLIRLQGQLAPGARVVAAAMVKHLPRSAGDLLEEYVGPVQASLAVKKARLLFATPQPMEVRTSPYPTRYRLDEPAIELLNHANVFCRDGLDIGTRAFLPYLPKNLGTARVADLGCGNGVLAIASALDNPQAHYTLVDESFMAVQSAAENWRATLGERVVEVRAADGLDTQEPDSLDVVLCNPPFHQQQVVGDFLAWRMFLQARAALVNGGALYIVGNRHLGYHTKLSRLFRGVEQVAATPKFVILKARK</sequence>
<accession>Q48DT7</accession>
<evidence type="ECO:0000255" key="1">
    <source>
        <dbReference type="HAMAP-Rule" id="MF_01859"/>
    </source>
</evidence>
<evidence type="ECO:0000305" key="2"/>
<protein>
    <recommendedName>
        <fullName evidence="1">Ribosomal RNA large subunit methyltransferase G</fullName>
        <ecNumber evidence="1">2.1.1.174</ecNumber>
    </recommendedName>
    <alternativeName>
        <fullName evidence="1">23S rRNA m2G1835 methyltransferase</fullName>
    </alternativeName>
    <alternativeName>
        <fullName evidence="1">rRNA (guanine-N(2)-)-methyltransferase RlmG</fullName>
    </alternativeName>
</protein>
<name>RLMG_PSE14</name>
<keyword id="KW-0963">Cytoplasm</keyword>
<keyword id="KW-0489">Methyltransferase</keyword>
<keyword id="KW-0698">rRNA processing</keyword>
<keyword id="KW-0949">S-adenosyl-L-methionine</keyword>
<keyword id="KW-0808">Transferase</keyword>